<gene>
    <name evidence="1" type="primary">queA</name>
    <name type="ordered locus">ECA1119</name>
</gene>
<name>QUEA_PECAS</name>
<reference key="1">
    <citation type="journal article" date="2004" name="Proc. Natl. Acad. Sci. U.S.A.">
        <title>Genome sequence of the enterobacterial phytopathogen Erwinia carotovora subsp. atroseptica and characterization of virulence factors.</title>
        <authorList>
            <person name="Bell K.S."/>
            <person name="Sebaihia M."/>
            <person name="Pritchard L."/>
            <person name="Holden M.T.G."/>
            <person name="Hyman L.J."/>
            <person name="Holeva M.C."/>
            <person name="Thomson N.R."/>
            <person name="Bentley S.D."/>
            <person name="Churcher L.J.C."/>
            <person name="Mungall K."/>
            <person name="Atkin R."/>
            <person name="Bason N."/>
            <person name="Brooks K."/>
            <person name="Chillingworth T."/>
            <person name="Clark K."/>
            <person name="Doggett J."/>
            <person name="Fraser A."/>
            <person name="Hance Z."/>
            <person name="Hauser H."/>
            <person name="Jagels K."/>
            <person name="Moule S."/>
            <person name="Norbertczak H."/>
            <person name="Ormond D."/>
            <person name="Price C."/>
            <person name="Quail M.A."/>
            <person name="Sanders M."/>
            <person name="Walker D."/>
            <person name="Whitehead S."/>
            <person name="Salmond G.P.C."/>
            <person name="Birch P.R.J."/>
            <person name="Parkhill J."/>
            <person name="Toth I.K."/>
        </authorList>
    </citation>
    <scope>NUCLEOTIDE SEQUENCE [LARGE SCALE GENOMIC DNA]</scope>
    <source>
        <strain>SCRI 1043 / ATCC BAA-672</strain>
    </source>
</reference>
<accession>Q6D856</accession>
<comment type="function">
    <text evidence="1">Transfers and isomerizes the ribose moiety from AdoMet to the 7-aminomethyl group of 7-deazaguanine (preQ1-tRNA) to give epoxyqueuosine (oQ-tRNA).</text>
</comment>
<comment type="catalytic activity">
    <reaction evidence="1">
        <text>7-aminomethyl-7-carbaguanosine(34) in tRNA + S-adenosyl-L-methionine = epoxyqueuosine(34) in tRNA + adenine + L-methionine + 2 H(+)</text>
        <dbReference type="Rhea" id="RHEA:32155"/>
        <dbReference type="Rhea" id="RHEA-COMP:10342"/>
        <dbReference type="Rhea" id="RHEA-COMP:18582"/>
        <dbReference type="ChEBI" id="CHEBI:15378"/>
        <dbReference type="ChEBI" id="CHEBI:16708"/>
        <dbReference type="ChEBI" id="CHEBI:57844"/>
        <dbReference type="ChEBI" id="CHEBI:59789"/>
        <dbReference type="ChEBI" id="CHEBI:82833"/>
        <dbReference type="ChEBI" id="CHEBI:194443"/>
        <dbReference type="EC" id="2.4.99.17"/>
    </reaction>
</comment>
<comment type="pathway">
    <text evidence="1">tRNA modification; tRNA-queuosine biosynthesis.</text>
</comment>
<comment type="subunit">
    <text evidence="1">Monomer.</text>
</comment>
<comment type="subcellular location">
    <subcellularLocation>
        <location evidence="1">Cytoplasm</location>
    </subcellularLocation>
</comment>
<comment type="similarity">
    <text evidence="1">Belongs to the QueA family.</text>
</comment>
<protein>
    <recommendedName>
        <fullName evidence="1">S-adenosylmethionine:tRNA ribosyltransferase-isomerase</fullName>
        <ecNumber evidence="1">2.4.99.17</ecNumber>
    </recommendedName>
    <alternativeName>
        <fullName evidence="1">Queuosine biosynthesis protein QueA</fullName>
    </alternativeName>
</protein>
<proteinExistence type="inferred from homology"/>
<evidence type="ECO:0000255" key="1">
    <source>
        <dbReference type="HAMAP-Rule" id="MF_00113"/>
    </source>
</evidence>
<organism>
    <name type="scientific">Pectobacterium atrosepticum (strain SCRI 1043 / ATCC BAA-672)</name>
    <name type="common">Erwinia carotovora subsp. atroseptica</name>
    <dbReference type="NCBI Taxonomy" id="218491"/>
    <lineage>
        <taxon>Bacteria</taxon>
        <taxon>Pseudomonadati</taxon>
        <taxon>Pseudomonadota</taxon>
        <taxon>Gammaproteobacteria</taxon>
        <taxon>Enterobacterales</taxon>
        <taxon>Pectobacteriaceae</taxon>
        <taxon>Pectobacterium</taxon>
    </lineage>
</organism>
<dbReference type="EC" id="2.4.99.17" evidence="1"/>
<dbReference type="EMBL" id="BX950851">
    <property type="protein sequence ID" value="CAG74029.1"/>
    <property type="molecule type" value="Genomic_DNA"/>
</dbReference>
<dbReference type="RefSeq" id="WP_011092713.1">
    <property type="nucleotide sequence ID" value="NC_004547.2"/>
</dbReference>
<dbReference type="SMR" id="Q6D856"/>
<dbReference type="STRING" id="218491.ECA1119"/>
<dbReference type="GeneID" id="57207933"/>
<dbReference type="KEGG" id="eca:ECA1119"/>
<dbReference type="PATRIC" id="fig|218491.5.peg.1128"/>
<dbReference type="eggNOG" id="COG0809">
    <property type="taxonomic scope" value="Bacteria"/>
</dbReference>
<dbReference type="HOGENOM" id="CLU_039110_1_0_6"/>
<dbReference type="OrthoDB" id="9805933at2"/>
<dbReference type="UniPathway" id="UPA00392"/>
<dbReference type="Proteomes" id="UP000007966">
    <property type="component" value="Chromosome"/>
</dbReference>
<dbReference type="GO" id="GO:0005737">
    <property type="term" value="C:cytoplasm"/>
    <property type="evidence" value="ECO:0007669"/>
    <property type="project" value="UniProtKB-SubCell"/>
</dbReference>
<dbReference type="GO" id="GO:0051075">
    <property type="term" value="F:S-adenosylmethionine:tRNA ribosyltransferase-isomerase activity"/>
    <property type="evidence" value="ECO:0007669"/>
    <property type="project" value="UniProtKB-EC"/>
</dbReference>
<dbReference type="GO" id="GO:0008616">
    <property type="term" value="P:queuosine biosynthetic process"/>
    <property type="evidence" value="ECO:0007669"/>
    <property type="project" value="UniProtKB-UniRule"/>
</dbReference>
<dbReference type="GO" id="GO:0002099">
    <property type="term" value="P:tRNA wobble guanine modification"/>
    <property type="evidence" value="ECO:0007669"/>
    <property type="project" value="TreeGrafter"/>
</dbReference>
<dbReference type="FunFam" id="2.40.10.240:FF:000001">
    <property type="entry name" value="S-adenosylmethionine:tRNA ribosyltransferase-isomerase"/>
    <property type="match status" value="1"/>
</dbReference>
<dbReference type="FunFam" id="3.40.1780.10:FF:000001">
    <property type="entry name" value="S-adenosylmethionine:tRNA ribosyltransferase-isomerase"/>
    <property type="match status" value="1"/>
</dbReference>
<dbReference type="Gene3D" id="2.40.10.240">
    <property type="entry name" value="QueA-like"/>
    <property type="match status" value="1"/>
</dbReference>
<dbReference type="Gene3D" id="3.40.1780.10">
    <property type="entry name" value="QueA-like"/>
    <property type="match status" value="1"/>
</dbReference>
<dbReference type="HAMAP" id="MF_00113">
    <property type="entry name" value="QueA"/>
    <property type="match status" value="1"/>
</dbReference>
<dbReference type="InterPro" id="IPR003699">
    <property type="entry name" value="QueA"/>
</dbReference>
<dbReference type="InterPro" id="IPR042118">
    <property type="entry name" value="QueA_dom1"/>
</dbReference>
<dbReference type="InterPro" id="IPR042119">
    <property type="entry name" value="QueA_dom2"/>
</dbReference>
<dbReference type="InterPro" id="IPR036100">
    <property type="entry name" value="QueA_sf"/>
</dbReference>
<dbReference type="NCBIfam" id="NF001140">
    <property type="entry name" value="PRK00147.1"/>
    <property type="match status" value="1"/>
</dbReference>
<dbReference type="NCBIfam" id="TIGR00113">
    <property type="entry name" value="queA"/>
    <property type="match status" value="1"/>
</dbReference>
<dbReference type="PANTHER" id="PTHR30307">
    <property type="entry name" value="S-ADENOSYLMETHIONINE:TRNA RIBOSYLTRANSFERASE-ISOMERASE"/>
    <property type="match status" value="1"/>
</dbReference>
<dbReference type="PANTHER" id="PTHR30307:SF0">
    <property type="entry name" value="S-ADENOSYLMETHIONINE:TRNA RIBOSYLTRANSFERASE-ISOMERASE"/>
    <property type="match status" value="1"/>
</dbReference>
<dbReference type="Pfam" id="PF02547">
    <property type="entry name" value="Queuosine_synth"/>
    <property type="match status" value="1"/>
</dbReference>
<dbReference type="SUPFAM" id="SSF111337">
    <property type="entry name" value="QueA-like"/>
    <property type="match status" value="1"/>
</dbReference>
<sequence>MRVADFSFELPESLIAHYPQAERSGCRLLSLDGPTGDLTHGVFTDLLEKLNPGDLLVFNNTRVIPARLFGRKVSGGKLEVLVERVLDDHRILAHVRASKAPKPGTELLLGDDESVKATMVARHDALFELHFDDSRDVLSILNDIGHMPLPPYIDRPDEDADRELYQTVYSQRPGAVAAPTAGLHFDEPMLAALRAKGIEMAFVTLHVGAGTFQPVRVDTIEDHIMHAEYAEVPQDVVDAVLACKARGNRVIAVGTTSVRSLESAAQASQDAPIAPFFGDTKIFIYPGYHYRIIDALVTNFHLPESTLIMLVSAFAGYQNTMSAYREAVAEQYRFFSYGDAMFITHSPMAEQEKVG</sequence>
<keyword id="KW-0963">Cytoplasm</keyword>
<keyword id="KW-0671">Queuosine biosynthesis</keyword>
<keyword id="KW-1185">Reference proteome</keyword>
<keyword id="KW-0949">S-adenosyl-L-methionine</keyword>
<keyword id="KW-0808">Transferase</keyword>
<feature type="chain" id="PRO_0000231336" description="S-adenosylmethionine:tRNA ribosyltransferase-isomerase">
    <location>
        <begin position="1"/>
        <end position="355"/>
    </location>
</feature>